<reference key="1">
    <citation type="journal article" date="1997" name="Mol. Phylogenet. Evol.">
        <title>Evolution of the Drosophila obscura species group inferred from the Gpdh and Sod genes.</title>
        <authorList>
            <person name="Barrio E."/>
            <person name="Ayala F.J."/>
        </authorList>
    </citation>
    <scope>NUCLEOTIDE SEQUENCE [GENOMIC DNA]</scope>
</reference>
<proteinExistence type="inferred from homology"/>
<name>SODC_DROOB</name>
<protein>
    <recommendedName>
        <fullName evidence="2">Superoxide dismutase [Cu-Zn]</fullName>
        <ecNumber>1.15.1.1</ecNumber>
    </recommendedName>
    <alternativeName>
        <fullName evidence="2">Superoxide dismutase 1</fullName>
    </alternativeName>
</protein>
<organism>
    <name type="scientific">Drosophila obscura</name>
    <name type="common">Fruit fly</name>
    <dbReference type="NCBI Taxonomy" id="7282"/>
    <lineage>
        <taxon>Eukaryota</taxon>
        <taxon>Metazoa</taxon>
        <taxon>Ecdysozoa</taxon>
        <taxon>Arthropoda</taxon>
        <taxon>Hexapoda</taxon>
        <taxon>Insecta</taxon>
        <taxon>Pterygota</taxon>
        <taxon>Neoptera</taxon>
        <taxon>Endopterygota</taxon>
        <taxon>Diptera</taxon>
        <taxon>Brachycera</taxon>
        <taxon>Muscomorpha</taxon>
        <taxon>Ephydroidea</taxon>
        <taxon>Drosophilidae</taxon>
        <taxon>Drosophila</taxon>
        <taxon>Sophophora</taxon>
    </lineage>
</organism>
<comment type="function">
    <text>Destroys radicals which are normally produced within the cells and which are toxic to biological systems.</text>
</comment>
<comment type="catalytic activity">
    <reaction>
        <text>2 superoxide + 2 H(+) = H2O2 + O2</text>
        <dbReference type="Rhea" id="RHEA:20696"/>
        <dbReference type="ChEBI" id="CHEBI:15378"/>
        <dbReference type="ChEBI" id="CHEBI:15379"/>
        <dbReference type="ChEBI" id="CHEBI:16240"/>
        <dbReference type="ChEBI" id="CHEBI:18421"/>
        <dbReference type="EC" id="1.15.1.1"/>
    </reaction>
</comment>
<comment type="cofactor">
    <cofactor evidence="1">
        <name>Cu cation</name>
        <dbReference type="ChEBI" id="CHEBI:23378"/>
    </cofactor>
    <text evidence="1">Binds 1 copper ion per subunit.</text>
</comment>
<comment type="cofactor">
    <cofactor evidence="1">
        <name>Zn(2+)</name>
        <dbReference type="ChEBI" id="CHEBI:29105"/>
    </cofactor>
    <text evidence="1">Binds 1 zinc ion per subunit.</text>
</comment>
<comment type="subunit">
    <text evidence="1">Homodimer.</text>
</comment>
<comment type="subcellular location">
    <subcellularLocation>
        <location>Cytoplasm</location>
    </subcellularLocation>
</comment>
<comment type="similarity">
    <text evidence="4">Belongs to the Cu-Zn superoxide dismutase family.</text>
</comment>
<dbReference type="EC" id="1.15.1.1"/>
<dbReference type="EMBL" id="U47892">
    <property type="protein sequence ID" value="AAB50302.1"/>
    <property type="molecule type" value="Genomic_DNA"/>
</dbReference>
<dbReference type="SMR" id="Q95085"/>
<dbReference type="EnsemblMetazoa" id="XM_022362537.2">
    <property type="protein sequence ID" value="XP_022218229.1"/>
    <property type="gene ID" value="LOC111071281"/>
</dbReference>
<dbReference type="OrthoDB" id="2015551at2759"/>
<dbReference type="GO" id="GO:0005737">
    <property type="term" value="C:cytoplasm"/>
    <property type="evidence" value="ECO:0007669"/>
    <property type="project" value="UniProtKB-SubCell"/>
</dbReference>
<dbReference type="GO" id="GO:0005507">
    <property type="term" value="F:copper ion binding"/>
    <property type="evidence" value="ECO:0007669"/>
    <property type="project" value="InterPro"/>
</dbReference>
<dbReference type="GO" id="GO:0004784">
    <property type="term" value="F:superoxide dismutase activity"/>
    <property type="evidence" value="ECO:0007669"/>
    <property type="project" value="UniProtKB-EC"/>
</dbReference>
<dbReference type="CDD" id="cd00305">
    <property type="entry name" value="Cu-Zn_Superoxide_Dismutase"/>
    <property type="match status" value="1"/>
</dbReference>
<dbReference type="Gene3D" id="2.60.40.200">
    <property type="entry name" value="Superoxide dismutase, copper/zinc binding domain"/>
    <property type="match status" value="1"/>
</dbReference>
<dbReference type="InterPro" id="IPR036423">
    <property type="entry name" value="SOD-like_Cu/Zn_dom_sf"/>
</dbReference>
<dbReference type="InterPro" id="IPR024134">
    <property type="entry name" value="SOD_Cu/Zn_/chaperone"/>
</dbReference>
<dbReference type="InterPro" id="IPR018152">
    <property type="entry name" value="SOD_Cu/Zn_BS"/>
</dbReference>
<dbReference type="InterPro" id="IPR001424">
    <property type="entry name" value="SOD_Cu_Zn_dom"/>
</dbReference>
<dbReference type="PANTHER" id="PTHR10003">
    <property type="entry name" value="SUPEROXIDE DISMUTASE CU-ZN -RELATED"/>
    <property type="match status" value="1"/>
</dbReference>
<dbReference type="Pfam" id="PF00080">
    <property type="entry name" value="Sod_Cu"/>
    <property type="match status" value="1"/>
</dbReference>
<dbReference type="PRINTS" id="PR00068">
    <property type="entry name" value="CUZNDISMTASE"/>
</dbReference>
<dbReference type="SUPFAM" id="SSF49329">
    <property type="entry name" value="Cu,Zn superoxide dismutase-like"/>
    <property type="match status" value="1"/>
</dbReference>
<dbReference type="PROSITE" id="PS00087">
    <property type="entry name" value="SOD_CU_ZN_1"/>
    <property type="match status" value="1"/>
</dbReference>
<evidence type="ECO:0000250" key="1"/>
<evidence type="ECO:0000250" key="2">
    <source>
        <dbReference type="UniProtKB" id="P61851"/>
    </source>
</evidence>
<evidence type="ECO:0000256" key="3">
    <source>
        <dbReference type="SAM" id="MobiDB-lite"/>
    </source>
</evidence>
<evidence type="ECO:0000305" key="4"/>
<gene>
    <name evidence="2" type="primary">Sod1</name>
    <name evidence="2" type="synonym">Sod</name>
</gene>
<keyword id="KW-0049">Antioxidant</keyword>
<keyword id="KW-0186">Copper</keyword>
<keyword id="KW-0963">Cytoplasm</keyword>
<keyword id="KW-0479">Metal-binding</keyword>
<keyword id="KW-0560">Oxidoreductase</keyword>
<keyword id="KW-0862">Zinc</keyword>
<feature type="chain" id="PRO_0000164089" description="Superoxide dismutase [Cu-Zn]">
    <location>
        <begin position="1" status="less than"/>
        <end position="114" status="greater than"/>
    </location>
</feature>
<feature type="region of interest" description="Disordered" evidence="3">
    <location>
        <begin position="48"/>
        <end position="76"/>
    </location>
</feature>
<feature type="compositionally biased region" description="Basic and acidic residues" evidence="3">
    <location>
        <begin position="58"/>
        <end position="73"/>
    </location>
</feature>
<feature type="binding site" evidence="1">
    <location>
        <position position="37"/>
    </location>
    <ligand>
        <name>Cu cation</name>
        <dbReference type="ChEBI" id="CHEBI:23378"/>
        <note>catalytic</note>
    </ligand>
</feature>
<feature type="binding site" evidence="1">
    <location>
        <position position="39"/>
    </location>
    <ligand>
        <name>Cu cation</name>
        <dbReference type="ChEBI" id="CHEBI:23378"/>
        <note>catalytic</note>
    </ligand>
</feature>
<feature type="binding site" evidence="1">
    <location>
        <position position="54"/>
    </location>
    <ligand>
        <name>Cu cation</name>
        <dbReference type="ChEBI" id="CHEBI:23378"/>
        <note>catalytic</note>
    </ligand>
</feature>
<feature type="binding site" evidence="1">
    <location>
        <position position="54"/>
    </location>
    <ligand>
        <name>Zn(2+)</name>
        <dbReference type="ChEBI" id="CHEBI:29105"/>
        <note>structural</note>
    </ligand>
</feature>
<feature type="binding site" evidence="1">
    <location>
        <position position="62"/>
    </location>
    <ligand>
        <name>Zn(2+)</name>
        <dbReference type="ChEBI" id="CHEBI:29105"/>
        <note>structural</note>
    </ligand>
</feature>
<feature type="binding site" evidence="1">
    <location>
        <position position="71"/>
    </location>
    <ligand>
        <name>Zn(2+)</name>
        <dbReference type="ChEBI" id="CHEBI:29105"/>
        <note>structural</note>
    </ligand>
</feature>
<feature type="binding site" evidence="1">
    <location>
        <position position="74"/>
    </location>
    <ligand>
        <name>Zn(2+)</name>
        <dbReference type="ChEBI" id="CHEBI:29105"/>
        <note>structural</note>
    </ligand>
</feature>
<feature type="binding site" evidence="1">
    <location>
        <position position="111"/>
    </location>
    <ligand>
        <name>Cu cation</name>
        <dbReference type="ChEBI" id="CHEBI:23378"/>
        <note>catalytic</note>
    </ligand>
</feature>
<feature type="non-terminal residue">
    <location>
        <position position="1"/>
    </location>
</feature>
<feature type="non-terminal residue">
    <location>
        <position position="114"/>
    </location>
</feature>
<sequence length="114" mass="11909">INGDAKGTVFFEQETSEAPVKVTGEVLGLTKGLHGFHVHEFGDNTNGCMSSGPHFNPRSKEHGAPTDENRHLGDLGNIQAAGDSPTAVSITDSKITLFGADSIIGRTVVVHADA</sequence>
<accession>Q95085</accession>